<accession>B1X935</accession>
<comment type="function">
    <text evidence="1">Catalyzes the last two steps in the biosynthesis of 5-methylaminomethyl-2-thiouridine (mnm(5)s(2)U) at the wobble position (U34) in tRNA. Catalyzes the FAD-dependent demodification of cmnm(5)s(2)U34 to nm(5)s(2)U34, followed by the transfer of a methyl group from S-adenosyl-L-methionine to nm(5)s(2)U34, to form mnm(5)s(2)U34.</text>
</comment>
<comment type="catalytic activity">
    <reaction evidence="1">
        <text>5-aminomethyl-2-thiouridine(34) in tRNA + S-adenosyl-L-methionine = 5-methylaminomethyl-2-thiouridine(34) in tRNA + S-adenosyl-L-homocysteine + H(+)</text>
        <dbReference type="Rhea" id="RHEA:19569"/>
        <dbReference type="Rhea" id="RHEA-COMP:10195"/>
        <dbReference type="Rhea" id="RHEA-COMP:10197"/>
        <dbReference type="ChEBI" id="CHEBI:15378"/>
        <dbReference type="ChEBI" id="CHEBI:57856"/>
        <dbReference type="ChEBI" id="CHEBI:59789"/>
        <dbReference type="ChEBI" id="CHEBI:74454"/>
        <dbReference type="ChEBI" id="CHEBI:74455"/>
        <dbReference type="EC" id="2.1.1.61"/>
    </reaction>
</comment>
<comment type="cofactor">
    <cofactor evidence="1">
        <name>FAD</name>
        <dbReference type="ChEBI" id="CHEBI:57692"/>
    </cofactor>
</comment>
<comment type="subcellular location">
    <subcellularLocation>
        <location evidence="1">Cytoplasm</location>
    </subcellularLocation>
</comment>
<comment type="similarity">
    <text evidence="1">In the N-terminal section; belongs to the methyltransferase superfamily. tRNA (mnm(5)s(2)U34)-methyltransferase family.</text>
</comment>
<comment type="similarity">
    <text evidence="1">In the C-terminal section; belongs to the DAO family.</text>
</comment>
<proteinExistence type="inferred from homology"/>
<name>MNMC_ECODH</name>
<gene>
    <name evidence="1" type="primary">mnmC</name>
    <name type="ordered locus">ECDH10B_2486</name>
</gene>
<protein>
    <recommendedName>
        <fullName evidence="1">tRNA 5-methylaminomethyl-2-thiouridine biosynthesis bifunctional protein MnmC</fullName>
        <shortName evidence="1">tRNA mnm(5)s(2)U biosynthesis bifunctional protein</shortName>
    </recommendedName>
    <domain>
        <recommendedName>
            <fullName evidence="1">tRNA (mnm(5)s(2)U34)-methyltransferase</fullName>
            <ecNumber evidence="1">2.1.1.61</ecNumber>
        </recommendedName>
    </domain>
    <domain>
        <recommendedName>
            <fullName evidence="1">FAD-dependent cmnm(5)s(2)U34 oxidoreductase</fullName>
            <ecNumber evidence="1">1.5.-.-</ecNumber>
        </recommendedName>
    </domain>
</protein>
<dbReference type="EC" id="2.1.1.61" evidence="1"/>
<dbReference type="EC" id="1.5.-.-" evidence="1"/>
<dbReference type="EMBL" id="CP000948">
    <property type="protein sequence ID" value="ACB03482.1"/>
    <property type="molecule type" value="Genomic_DNA"/>
</dbReference>
<dbReference type="RefSeq" id="WP_000683799.1">
    <property type="nucleotide sequence ID" value="NC_010473.1"/>
</dbReference>
<dbReference type="SMR" id="B1X935"/>
<dbReference type="KEGG" id="ecd:ECDH10B_2486"/>
<dbReference type="HOGENOM" id="CLU_022427_1_0_6"/>
<dbReference type="GO" id="GO:0005737">
    <property type="term" value="C:cytoplasm"/>
    <property type="evidence" value="ECO:0007669"/>
    <property type="project" value="UniProtKB-SubCell"/>
</dbReference>
<dbReference type="GO" id="GO:0050660">
    <property type="term" value="F:flavin adenine dinucleotide binding"/>
    <property type="evidence" value="ECO:0007669"/>
    <property type="project" value="UniProtKB-UniRule"/>
</dbReference>
<dbReference type="GO" id="GO:0016645">
    <property type="term" value="F:oxidoreductase activity, acting on the CH-NH group of donors"/>
    <property type="evidence" value="ECO:0007669"/>
    <property type="project" value="InterPro"/>
</dbReference>
<dbReference type="GO" id="GO:0004808">
    <property type="term" value="F:tRNA (5-methylaminomethyl-2-thiouridylate)(34)-methyltransferase activity"/>
    <property type="evidence" value="ECO:0007669"/>
    <property type="project" value="UniProtKB-EC"/>
</dbReference>
<dbReference type="GO" id="GO:0032259">
    <property type="term" value="P:methylation"/>
    <property type="evidence" value="ECO:0007669"/>
    <property type="project" value="UniProtKB-KW"/>
</dbReference>
<dbReference type="GO" id="GO:0002098">
    <property type="term" value="P:tRNA wobble uridine modification"/>
    <property type="evidence" value="ECO:0007669"/>
    <property type="project" value="TreeGrafter"/>
</dbReference>
<dbReference type="FunFam" id="3.40.50.150:FF:000107">
    <property type="entry name" value="tRNA 5-methylaminomethyl-2-thiouridine biosynthesis bifunctional protein MnmC"/>
    <property type="match status" value="1"/>
</dbReference>
<dbReference type="Gene3D" id="3.30.9.10">
    <property type="entry name" value="D-Amino Acid Oxidase, subunit A, domain 2"/>
    <property type="match status" value="1"/>
</dbReference>
<dbReference type="Gene3D" id="3.50.50.60">
    <property type="entry name" value="FAD/NAD(P)-binding domain"/>
    <property type="match status" value="1"/>
</dbReference>
<dbReference type="Gene3D" id="3.40.50.150">
    <property type="entry name" value="Vaccinia Virus protein VP39"/>
    <property type="match status" value="1"/>
</dbReference>
<dbReference type="HAMAP" id="MF_01102">
    <property type="entry name" value="MnmC"/>
    <property type="match status" value="1"/>
</dbReference>
<dbReference type="InterPro" id="IPR006076">
    <property type="entry name" value="FAD-dep_OxRdtase"/>
</dbReference>
<dbReference type="InterPro" id="IPR036188">
    <property type="entry name" value="FAD/NAD-bd_sf"/>
</dbReference>
<dbReference type="InterPro" id="IPR008471">
    <property type="entry name" value="MnmC-like_methylTransf"/>
</dbReference>
<dbReference type="InterPro" id="IPR029063">
    <property type="entry name" value="SAM-dependent_MTases_sf"/>
</dbReference>
<dbReference type="InterPro" id="IPR023032">
    <property type="entry name" value="tRNA_MAMT_biosynth_bifunc_MnmC"/>
</dbReference>
<dbReference type="InterPro" id="IPR047785">
    <property type="entry name" value="tRNA_MNMC2"/>
</dbReference>
<dbReference type="InterPro" id="IPR017610">
    <property type="entry name" value="tRNA_S-uridine_synth_MnmC_C"/>
</dbReference>
<dbReference type="NCBIfam" id="TIGR03197">
    <property type="entry name" value="MnmC_Cterm"/>
    <property type="match status" value="1"/>
</dbReference>
<dbReference type="NCBIfam" id="NF002480">
    <property type="entry name" value="PRK01747.1-1"/>
    <property type="match status" value="1"/>
</dbReference>
<dbReference type="NCBIfam" id="NF002481">
    <property type="entry name" value="PRK01747.1-2"/>
    <property type="match status" value="1"/>
</dbReference>
<dbReference type="NCBIfam" id="NF002482">
    <property type="entry name" value="PRK01747.1-3"/>
    <property type="match status" value="1"/>
</dbReference>
<dbReference type="NCBIfam" id="NF002484">
    <property type="entry name" value="PRK01747.1-5"/>
    <property type="match status" value="1"/>
</dbReference>
<dbReference type="NCBIfam" id="NF033855">
    <property type="entry name" value="tRNA_MNMC2"/>
    <property type="match status" value="1"/>
</dbReference>
<dbReference type="PANTHER" id="PTHR13847">
    <property type="entry name" value="SARCOSINE DEHYDROGENASE-RELATED"/>
    <property type="match status" value="1"/>
</dbReference>
<dbReference type="PANTHER" id="PTHR13847:SF283">
    <property type="entry name" value="TRNA 5-METHYLAMINOMETHYL-2-THIOURIDINE BIOSYNTHESIS BIFUNCTIONAL PROTEIN MNMC"/>
    <property type="match status" value="1"/>
</dbReference>
<dbReference type="Pfam" id="PF01266">
    <property type="entry name" value="DAO"/>
    <property type="match status" value="1"/>
</dbReference>
<dbReference type="Pfam" id="PF05430">
    <property type="entry name" value="Methyltransf_30"/>
    <property type="match status" value="1"/>
</dbReference>
<dbReference type="SUPFAM" id="SSF51905">
    <property type="entry name" value="FAD/NAD(P)-binding domain"/>
    <property type="match status" value="1"/>
</dbReference>
<sequence>MKHYSIQPANLEFNAEGTPVSRDFDDVYFSNDNGLEETRYVFLGGNQLEVRFPEHPHPLFVVAESGFGTGLNFLTLWQAFDQFREAHPQAQLQRLHFISFEKFPLTRADLALAHQHWPELAPWAEQLQAQWPMPLPGCHRLLLDEGRVTLDLWFGDINELTSQLDDSLNQKVDAWFLDGFAPAKNPDMWTQNLFNAMARLARPGGTLATFTSAGFVRRGLQDAGFTMQKRKGFGRKREMLCGVMEQTLPLPCSAPWFNRTGSSKREAAIIGGGIASALLSLALLRRGWQVTLYCADEAPALGASGNRQGALYPLLSKHDEALNRFFSNAFTFARRFYDQLPVKFDHDWCGVTQLGWDEKSQHKIAQMLSMDLPAELAVAVEANAVEQITGVATNCSGITYPQGGWLCPAELTRNVLELAQQQGLQIYYQYQLQNLSRKDDCWLLNFAGDQQATHSVVVLANGHQISRFSQTSTLPVYSVAGQVSHIPTTPELAELKQVLCYDGYLTPQNPANQHHCIGASYHRGSEDTAYSEDDQQQNRQRLIDCFPQAQWAKEVDVSDKEARCGVRCATRDHLPMVGNVPDYEATLVEYASLAEQKDEAVSAPVFDDLFMFAALGSRGLCSAPLCAEILAAQMSDEPIPMDASTLAALNPNRLWVRKLLKGKAVKAG</sequence>
<keyword id="KW-0963">Cytoplasm</keyword>
<keyword id="KW-0274">FAD</keyword>
<keyword id="KW-0285">Flavoprotein</keyword>
<keyword id="KW-0489">Methyltransferase</keyword>
<keyword id="KW-0511">Multifunctional enzyme</keyword>
<keyword id="KW-0560">Oxidoreductase</keyword>
<keyword id="KW-0949">S-adenosyl-L-methionine</keyword>
<keyword id="KW-0808">Transferase</keyword>
<keyword id="KW-0819">tRNA processing</keyword>
<organism>
    <name type="scientific">Escherichia coli (strain K12 / DH10B)</name>
    <dbReference type="NCBI Taxonomy" id="316385"/>
    <lineage>
        <taxon>Bacteria</taxon>
        <taxon>Pseudomonadati</taxon>
        <taxon>Pseudomonadota</taxon>
        <taxon>Gammaproteobacteria</taxon>
        <taxon>Enterobacterales</taxon>
        <taxon>Enterobacteriaceae</taxon>
        <taxon>Escherichia</taxon>
    </lineage>
</organism>
<reference key="1">
    <citation type="journal article" date="2008" name="J. Bacteriol.">
        <title>The complete genome sequence of Escherichia coli DH10B: insights into the biology of a laboratory workhorse.</title>
        <authorList>
            <person name="Durfee T."/>
            <person name="Nelson R."/>
            <person name="Baldwin S."/>
            <person name="Plunkett G. III"/>
            <person name="Burland V."/>
            <person name="Mau B."/>
            <person name="Petrosino J.F."/>
            <person name="Qin X."/>
            <person name="Muzny D.M."/>
            <person name="Ayele M."/>
            <person name="Gibbs R.A."/>
            <person name="Csorgo B."/>
            <person name="Posfai G."/>
            <person name="Weinstock G.M."/>
            <person name="Blattner F.R."/>
        </authorList>
    </citation>
    <scope>NUCLEOTIDE SEQUENCE [LARGE SCALE GENOMIC DNA]</scope>
    <source>
        <strain>K12 / DH10B</strain>
    </source>
</reference>
<feature type="chain" id="PRO_0000347983" description="tRNA 5-methylaminomethyl-2-thiouridine biosynthesis bifunctional protein MnmC">
    <location>
        <begin position="1"/>
        <end position="668"/>
    </location>
</feature>
<feature type="region of interest" description="tRNA (mnm(5)s(2)U34)-methyltransferase">
    <location>
        <begin position="1"/>
        <end position="245"/>
    </location>
</feature>
<feature type="region of interest" description="FAD-dependent cmnm(5)s(2)U34 oxidoreductase">
    <location>
        <begin position="270"/>
        <end position="668"/>
    </location>
</feature>
<evidence type="ECO:0000255" key="1">
    <source>
        <dbReference type="HAMAP-Rule" id="MF_01102"/>
    </source>
</evidence>